<evidence type="ECO:0000255" key="1">
    <source>
        <dbReference type="HAMAP-Rule" id="MF_01307"/>
    </source>
</evidence>
<evidence type="ECO:0000305" key="2"/>
<gene>
    <name evidence="1" type="primary">rpsE</name>
    <name type="ordered locus">Ajs_0398</name>
</gene>
<comment type="function">
    <text evidence="1">With S4 and S12 plays an important role in translational accuracy.</text>
</comment>
<comment type="function">
    <text evidence="1">Located at the back of the 30S subunit body where it stabilizes the conformation of the head with respect to the body.</text>
</comment>
<comment type="subunit">
    <text evidence="1">Part of the 30S ribosomal subunit. Contacts proteins S4 and S8.</text>
</comment>
<comment type="domain">
    <text>The N-terminal domain interacts with the head of the 30S subunit; the C-terminal domain interacts with the body and contacts protein S4. The interaction surface between S4 and S5 is involved in control of translational fidelity.</text>
</comment>
<comment type="similarity">
    <text evidence="1">Belongs to the universal ribosomal protein uS5 family.</text>
</comment>
<feature type="chain" id="PRO_0000323053" description="Small ribosomal subunit protein uS5">
    <location>
        <begin position="1"/>
        <end position="173"/>
    </location>
</feature>
<feature type="domain" description="S5 DRBM" evidence="1">
    <location>
        <begin position="17"/>
        <end position="80"/>
    </location>
</feature>
<sequence>MAKFQPKVQSEGQDDGLREKMIAVNRVTKVVKGGRILGFAALTVVGDGDGRVGMGKGKSKEVPAAVQKAMEEARRNMVKVSLKNGTIHHNVTGHHGAAVVMMAPAPKGTGIIAGGPMRAVFEVMGITDIVAKSHGSSNPYNMVRATFDALTNSTTPAEVAAKRGKTVEDLFAA</sequence>
<name>RS5_ACISJ</name>
<reference key="1">
    <citation type="submission" date="2006-12" db="EMBL/GenBank/DDBJ databases">
        <title>Complete sequence of chromosome 1 of Acidovorax sp. JS42.</title>
        <authorList>
            <person name="Copeland A."/>
            <person name="Lucas S."/>
            <person name="Lapidus A."/>
            <person name="Barry K."/>
            <person name="Detter J.C."/>
            <person name="Glavina del Rio T."/>
            <person name="Dalin E."/>
            <person name="Tice H."/>
            <person name="Pitluck S."/>
            <person name="Chertkov O."/>
            <person name="Brettin T."/>
            <person name="Bruce D."/>
            <person name="Han C."/>
            <person name="Tapia R."/>
            <person name="Gilna P."/>
            <person name="Schmutz J."/>
            <person name="Larimer F."/>
            <person name="Land M."/>
            <person name="Hauser L."/>
            <person name="Kyrpides N."/>
            <person name="Kim E."/>
            <person name="Stahl D."/>
            <person name="Richardson P."/>
        </authorList>
    </citation>
    <scope>NUCLEOTIDE SEQUENCE [LARGE SCALE GENOMIC DNA]</scope>
    <source>
        <strain>JS42</strain>
    </source>
</reference>
<keyword id="KW-0687">Ribonucleoprotein</keyword>
<keyword id="KW-0689">Ribosomal protein</keyword>
<keyword id="KW-0694">RNA-binding</keyword>
<keyword id="KW-0699">rRNA-binding</keyword>
<accession>A1W325</accession>
<proteinExistence type="inferred from homology"/>
<organism>
    <name type="scientific">Acidovorax sp. (strain JS42)</name>
    <dbReference type="NCBI Taxonomy" id="232721"/>
    <lineage>
        <taxon>Bacteria</taxon>
        <taxon>Pseudomonadati</taxon>
        <taxon>Pseudomonadota</taxon>
        <taxon>Betaproteobacteria</taxon>
        <taxon>Burkholderiales</taxon>
        <taxon>Comamonadaceae</taxon>
        <taxon>Acidovorax</taxon>
    </lineage>
</organism>
<protein>
    <recommendedName>
        <fullName evidence="1">Small ribosomal subunit protein uS5</fullName>
    </recommendedName>
    <alternativeName>
        <fullName evidence="2">30S ribosomal protein S5</fullName>
    </alternativeName>
</protein>
<dbReference type="EMBL" id="CP000539">
    <property type="protein sequence ID" value="ABM40650.1"/>
    <property type="molecule type" value="Genomic_DNA"/>
</dbReference>
<dbReference type="SMR" id="A1W325"/>
<dbReference type="STRING" id="232721.Ajs_0398"/>
<dbReference type="KEGG" id="ajs:Ajs_0398"/>
<dbReference type="eggNOG" id="COG0098">
    <property type="taxonomic scope" value="Bacteria"/>
</dbReference>
<dbReference type="HOGENOM" id="CLU_065898_2_2_4"/>
<dbReference type="Proteomes" id="UP000000645">
    <property type="component" value="Chromosome"/>
</dbReference>
<dbReference type="GO" id="GO:0015935">
    <property type="term" value="C:small ribosomal subunit"/>
    <property type="evidence" value="ECO:0007669"/>
    <property type="project" value="InterPro"/>
</dbReference>
<dbReference type="GO" id="GO:0019843">
    <property type="term" value="F:rRNA binding"/>
    <property type="evidence" value="ECO:0007669"/>
    <property type="project" value="UniProtKB-UniRule"/>
</dbReference>
<dbReference type="GO" id="GO:0003735">
    <property type="term" value="F:structural constituent of ribosome"/>
    <property type="evidence" value="ECO:0007669"/>
    <property type="project" value="InterPro"/>
</dbReference>
<dbReference type="GO" id="GO:0006412">
    <property type="term" value="P:translation"/>
    <property type="evidence" value="ECO:0007669"/>
    <property type="project" value="UniProtKB-UniRule"/>
</dbReference>
<dbReference type="FunFam" id="3.30.160.20:FF:000001">
    <property type="entry name" value="30S ribosomal protein S5"/>
    <property type="match status" value="1"/>
</dbReference>
<dbReference type="FunFam" id="3.30.230.10:FF:000002">
    <property type="entry name" value="30S ribosomal protein S5"/>
    <property type="match status" value="1"/>
</dbReference>
<dbReference type="Gene3D" id="3.30.160.20">
    <property type="match status" value="1"/>
</dbReference>
<dbReference type="Gene3D" id="3.30.230.10">
    <property type="match status" value="1"/>
</dbReference>
<dbReference type="HAMAP" id="MF_01307_B">
    <property type="entry name" value="Ribosomal_uS5_B"/>
    <property type="match status" value="1"/>
</dbReference>
<dbReference type="InterPro" id="IPR020568">
    <property type="entry name" value="Ribosomal_Su5_D2-typ_SF"/>
</dbReference>
<dbReference type="InterPro" id="IPR000851">
    <property type="entry name" value="Ribosomal_uS5"/>
</dbReference>
<dbReference type="InterPro" id="IPR005712">
    <property type="entry name" value="Ribosomal_uS5_bac-type"/>
</dbReference>
<dbReference type="InterPro" id="IPR005324">
    <property type="entry name" value="Ribosomal_uS5_C"/>
</dbReference>
<dbReference type="InterPro" id="IPR013810">
    <property type="entry name" value="Ribosomal_uS5_N"/>
</dbReference>
<dbReference type="InterPro" id="IPR018192">
    <property type="entry name" value="Ribosomal_uS5_N_CS"/>
</dbReference>
<dbReference type="InterPro" id="IPR014721">
    <property type="entry name" value="Ribsml_uS5_D2-typ_fold_subgr"/>
</dbReference>
<dbReference type="NCBIfam" id="TIGR01021">
    <property type="entry name" value="rpsE_bact"/>
    <property type="match status" value="1"/>
</dbReference>
<dbReference type="PANTHER" id="PTHR48277">
    <property type="entry name" value="MITOCHONDRIAL RIBOSOMAL PROTEIN S5"/>
    <property type="match status" value="1"/>
</dbReference>
<dbReference type="PANTHER" id="PTHR48277:SF1">
    <property type="entry name" value="MITOCHONDRIAL RIBOSOMAL PROTEIN S5"/>
    <property type="match status" value="1"/>
</dbReference>
<dbReference type="Pfam" id="PF00333">
    <property type="entry name" value="Ribosomal_S5"/>
    <property type="match status" value="1"/>
</dbReference>
<dbReference type="Pfam" id="PF03719">
    <property type="entry name" value="Ribosomal_S5_C"/>
    <property type="match status" value="1"/>
</dbReference>
<dbReference type="SUPFAM" id="SSF54768">
    <property type="entry name" value="dsRNA-binding domain-like"/>
    <property type="match status" value="1"/>
</dbReference>
<dbReference type="SUPFAM" id="SSF54211">
    <property type="entry name" value="Ribosomal protein S5 domain 2-like"/>
    <property type="match status" value="1"/>
</dbReference>
<dbReference type="PROSITE" id="PS00585">
    <property type="entry name" value="RIBOSOMAL_S5"/>
    <property type="match status" value="1"/>
</dbReference>
<dbReference type="PROSITE" id="PS50881">
    <property type="entry name" value="S5_DSRBD"/>
    <property type="match status" value="1"/>
</dbReference>